<name>DNAK_BURCE</name>
<feature type="chain" id="PRO_0000078436" description="Chaperone protein DnaK">
    <location>
        <begin position="1"/>
        <end position="650"/>
    </location>
</feature>
<feature type="modified residue" description="Phosphothreonine; by autocatalysis" evidence="1">
    <location>
        <position position="201"/>
    </location>
</feature>
<evidence type="ECO:0000250" key="1"/>
<evidence type="ECO:0000305" key="2"/>
<keyword id="KW-0067">ATP-binding</keyword>
<keyword id="KW-0143">Chaperone</keyword>
<keyword id="KW-0547">Nucleotide-binding</keyword>
<keyword id="KW-0597">Phosphoprotein</keyword>
<keyword id="KW-0346">Stress response</keyword>
<reference key="1">
    <citation type="journal article" date="1994" name="J. Bacteriol.">
        <title>Cloning of the hsp70 (dnaK) genes from Rhizobium meliloti and Pseudomonas cepacia: phylogenetic analyses of mitochondrial origin based on a highly conserved protein sequence.</title>
        <authorList>
            <person name="Falah M."/>
            <person name="Gupta R.S."/>
        </authorList>
    </citation>
    <scope>NUCLEOTIDE SEQUENCE [GENOMIC DNA]</scope>
</reference>
<dbReference type="EMBL" id="L36603">
    <property type="protein sequence ID" value="AAC41409.1"/>
    <property type="molecule type" value="Genomic_DNA"/>
</dbReference>
<dbReference type="PIR" id="A55551">
    <property type="entry name" value="A55551"/>
</dbReference>
<dbReference type="SMR" id="P42373"/>
<dbReference type="STRING" id="292.WI67_03520"/>
<dbReference type="eggNOG" id="COG0443">
    <property type="taxonomic scope" value="Bacteria"/>
</dbReference>
<dbReference type="GO" id="GO:0005524">
    <property type="term" value="F:ATP binding"/>
    <property type="evidence" value="ECO:0007669"/>
    <property type="project" value="UniProtKB-UniRule"/>
</dbReference>
<dbReference type="GO" id="GO:0140662">
    <property type="term" value="F:ATP-dependent protein folding chaperone"/>
    <property type="evidence" value="ECO:0007669"/>
    <property type="project" value="InterPro"/>
</dbReference>
<dbReference type="GO" id="GO:0051082">
    <property type="term" value="F:unfolded protein binding"/>
    <property type="evidence" value="ECO:0007669"/>
    <property type="project" value="InterPro"/>
</dbReference>
<dbReference type="CDD" id="cd10234">
    <property type="entry name" value="ASKHA_NBD_HSP70_DnaK-like"/>
    <property type="match status" value="1"/>
</dbReference>
<dbReference type="FunFam" id="2.60.34.10:FF:000014">
    <property type="entry name" value="Chaperone protein DnaK HSP70"/>
    <property type="match status" value="1"/>
</dbReference>
<dbReference type="FunFam" id="3.30.30.30:FF:000003">
    <property type="entry name" value="Heat shock protein 9"/>
    <property type="match status" value="1"/>
</dbReference>
<dbReference type="FunFam" id="1.20.1270.10:FF:000001">
    <property type="entry name" value="Molecular chaperone DnaK"/>
    <property type="match status" value="1"/>
</dbReference>
<dbReference type="FunFam" id="3.30.420.40:FF:000004">
    <property type="entry name" value="Molecular chaperone DnaK"/>
    <property type="match status" value="1"/>
</dbReference>
<dbReference type="FunFam" id="3.90.640.10:FF:000003">
    <property type="entry name" value="Molecular chaperone DnaK"/>
    <property type="match status" value="1"/>
</dbReference>
<dbReference type="Gene3D" id="1.20.1270.10">
    <property type="match status" value="1"/>
</dbReference>
<dbReference type="Gene3D" id="3.30.420.40">
    <property type="match status" value="2"/>
</dbReference>
<dbReference type="Gene3D" id="3.90.640.10">
    <property type="entry name" value="Actin, Chain A, domain 4"/>
    <property type="match status" value="1"/>
</dbReference>
<dbReference type="Gene3D" id="2.60.34.10">
    <property type="entry name" value="Substrate Binding Domain Of DNAk, Chain A, domain 1"/>
    <property type="match status" value="1"/>
</dbReference>
<dbReference type="HAMAP" id="MF_00332">
    <property type="entry name" value="DnaK"/>
    <property type="match status" value="1"/>
</dbReference>
<dbReference type="InterPro" id="IPR043129">
    <property type="entry name" value="ATPase_NBD"/>
</dbReference>
<dbReference type="InterPro" id="IPR012725">
    <property type="entry name" value="Chaperone_DnaK"/>
</dbReference>
<dbReference type="InterPro" id="IPR018181">
    <property type="entry name" value="Heat_shock_70_CS"/>
</dbReference>
<dbReference type="InterPro" id="IPR029048">
    <property type="entry name" value="HSP70_C_sf"/>
</dbReference>
<dbReference type="InterPro" id="IPR029047">
    <property type="entry name" value="HSP70_peptide-bd_sf"/>
</dbReference>
<dbReference type="InterPro" id="IPR013126">
    <property type="entry name" value="Hsp_70_fam"/>
</dbReference>
<dbReference type="NCBIfam" id="NF001413">
    <property type="entry name" value="PRK00290.1"/>
    <property type="match status" value="1"/>
</dbReference>
<dbReference type="NCBIfam" id="TIGR02350">
    <property type="entry name" value="prok_dnaK"/>
    <property type="match status" value="1"/>
</dbReference>
<dbReference type="PANTHER" id="PTHR19375">
    <property type="entry name" value="HEAT SHOCK PROTEIN 70KDA"/>
    <property type="match status" value="1"/>
</dbReference>
<dbReference type="Pfam" id="PF00012">
    <property type="entry name" value="HSP70"/>
    <property type="match status" value="1"/>
</dbReference>
<dbReference type="PRINTS" id="PR00301">
    <property type="entry name" value="HEATSHOCK70"/>
</dbReference>
<dbReference type="SUPFAM" id="SSF53067">
    <property type="entry name" value="Actin-like ATPase domain"/>
    <property type="match status" value="2"/>
</dbReference>
<dbReference type="SUPFAM" id="SSF100934">
    <property type="entry name" value="Heat shock protein 70kD (HSP70), C-terminal subdomain"/>
    <property type="match status" value="1"/>
</dbReference>
<dbReference type="SUPFAM" id="SSF100920">
    <property type="entry name" value="Heat shock protein 70kD (HSP70), peptide-binding domain"/>
    <property type="match status" value="1"/>
</dbReference>
<dbReference type="PROSITE" id="PS00297">
    <property type="entry name" value="HSP70_1"/>
    <property type="match status" value="1"/>
</dbReference>
<dbReference type="PROSITE" id="PS00329">
    <property type="entry name" value="HSP70_2"/>
    <property type="match status" value="1"/>
</dbReference>
<dbReference type="PROSITE" id="PS01036">
    <property type="entry name" value="HSP70_3"/>
    <property type="match status" value="1"/>
</dbReference>
<sequence>MGKIIGIDLGTTNSCVAIMEGNQVKVIENSEGTRTTPSIIAYMDDNEVLVGAPAKRQSVTNPKNTLFAVKRLIGRRFEEKEVQKDIGLMPYSIIKADNGDAWVEGHGEKLMAPPQVSAEAVRKMKKTAEDYLGEPVTEAVITVPAYFNDSQRQATKDAGRIAGLEVKRIINEPTAAALAFGLDKAEKGDRKIAVYDLGGGTFDVSIIEIADVDGEMQFEVLSTNGDTFLGGEDFDQRIIDYIIGEFKKEQGVDLSKDVLALQRLKEAAEKAKIELSSSQQTEINLPYITADASGPKHLNLKITRAKLEALVEDLVERTIEPCRIAIKDAGVKVSDIDDVILVGGQTRMPKVMEKVKEFFGKDPRRDVNPDEAVAVGAAIQGQVLSGDRKDVLLLDVTLSLGIETVGGVMTKMISKNTTIPTKHAQVYSTADDNQGAVTIKVFQGEREMAAGNKLLGEFNLEGIPPAPRGVPQIEVTFDIDANGILHVGAKDKATGKENKITIKANSGLSEAEIDQMIKDAEANAAEDHNVRELADSRNQGDALVHSTKKALTEYGDKLDAGEKEALEASLKSLEEVLKDTSADKAAIDAKVEELGKVSQKLGEKMYADMQAQQAGAAGAAGAAEGAAHAGGAQQAADDVVDAEFKEVKKD</sequence>
<comment type="function">
    <text evidence="1">Acts as a chaperone.</text>
</comment>
<comment type="induction">
    <text evidence="1">By stress conditions e.g. heat shock (By similarity).</text>
</comment>
<comment type="similarity">
    <text evidence="2">Belongs to the heat shock protein 70 family.</text>
</comment>
<proteinExistence type="inferred from homology"/>
<organism>
    <name type="scientific">Burkholderia cepacia</name>
    <name type="common">Pseudomonas cepacia</name>
    <dbReference type="NCBI Taxonomy" id="292"/>
    <lineage>
        <taxon>Bacteria</taxon>
        <taxon>Pseudomonadati</taxon>
        <taxon>Pseudomonadota</taxon>
        <taxon>Betaproteobacteria</taxon>
        <taxon>Burkholderiales</taxon>
        <taxon>Burkholderiaceae</taxon>
        <taxon>Burkholderia</taxon>
        <taxon>Burkholderia cepacia complex</taxon>
    </lineage>
</organism>
<accession>P42373</accession>
<protein>
    <recommendedName>
        <fullName>Chaperone protein DnaK</fullName>
    </recommendedName>
    <alternativeName>
        <fullName>HSP70</fullName>
    </alternativeName>
    <alternativeName>
        <fullName>Heat shock 70 kDa protein</fullName>
    </alternativeName>
    <alternativeName>
        <fullName>Heat shock protein 70</fullName>
    </alternativeName>
</protein>
<gene>
    <name type="primary">dnaK</name>
</gene>